<evidence type="ECO:0000255" key="1">
    <source>
        <dbReference type="HAMAP-Rule" id="MF_00600"/>
    </source>
</evidence>
<dbReference type="EC" id="5.6.1.7" evidence="1"/>
<dbReference type="EMBL" id="CP000115">
    <property type="protein sequence ID" value="ABA05827.1"/>
    <property type="molecule type" value="Genomic_DNA"/>
</dbReference>
<dbReference type="RefSeq" id="WP_011315778.1">
    <property type="nucleotide sequence ID" value="NC_007406.1"/>
</dbReference>
<dbReference type="SMR" id="Q3SPG4"/>
<dbReference type="STRING" id="323098.Nwi_2574"/>
<dbReference type="KEGG" id="nwi:Nwi_2574"/>
<dbReference type="eggNOG" id="COG0459">
    <property type="taxonomic scope" value="Bacteria"/>
</dbReference>
<dbReference type="HOGENOM" id="CLU_016503_3_0_5"/>
<dbReference type="OrthoDB" id="9766614at2"/>
<dbReference type="Proteomes" id="UP000002531">
    <property type="component" value="Chromosome"/>
</dbReference>
<dbReference type="GO" id="GO:0005737">
    <property type="term" value="C:cytoplasm"/>
    <property type="evidence" value="ECO:0007669"/>
    <property type="project" value="UniProtKB-SubCell"/>
</dbReference>
<dbReference type="GO" id="GO:0005524">
    <property type="term" value="F:ATP binding"/>
    <property type="evidence" value="ECO:0007669"/>
    <property type="project" value="UniProtKB-UniRule"/>
</dbReference>
<dbReference type="GO" id="GO:0140662">
    <property type="term" value="F:ATP-dependent protein folding chaperone"/>
    <property type="evidence" value="ECO:0007669"/>
    <property type="project" value="InterPro"/>
</dbReference>
<dbReference type="GO" id="GO:0016853">
    <property type="term" value="F:isomerase activity"/>
    <property type="evidence" value="ECO:0007669"/>
    <property type="project" value="UniProtKB-KW"/>
</dbReference>
<dbReference type="GO" id="GO:0051082">
    <property type="term" value="F:unfolded protein binding"/>
    <property type="evidence" value="ECO:0007669"/>
    <property type="project" value="UniProtKB-UniRule"/>
</dbReference>
<dbReference type="GO" id="GO:0042026">
    <property type="term" value="P:protein refolding"/>
    <property type="evidence" value="ECO:0007669"/>
    <property type="project" value="UniProtKB-UniRule"/>
</dbReference>
<dbReference type="CDD" id="cd03344">
    <property type="entry name" value="GroEL"/>
    <property type="match status" value="1"/>
</dbReference>
<dbReference type="FunFam" id="1.10.560.10:FF:000001">
    <property type="entry name" value="60 kDa chaperonin"/>
    <property type="match status" value="1"/>
</dbReference>
<dbReference type="FunFam" id="3.50.7.10:FF:000001">
    <property type="entry name" value="60 kDa chaperonin"/>
    <property type="match status" value="1"/>
</dbReference>
<dbReference type="Gene3D" id="3.50.7.10">
    <property type="entry name" value="GroEL"/>
    <property type="match status" value="1"/>
</dbReference>
<dbReference type="Gene3D" id="1.10.560.10">
    <property type="entry name" value="GroEL-like equatorial domain"/>
    <property type="match status" value="1"/>
</dbReference>
<dbReference type="Gene3D" id="3.30.260.10">
    <property type="entry name" value="TCP-1-like chaperonin intermediate domain"/>
    <property type="match status" value="1"/>
</dbReference>
<dbReference type="HAMAP" id="MF_00600">
    <property type="entry name" value="CH60"/>
    <property type="match status" value="1"/>
</dbReference>
<dbReference type="InterPro" id="IPR018370">
    <property type="entry name" value="Chaperonin_Cpn60_CS"/>
</dbReference>
<dbReference type="InterPro" id="IPR001844">
    <property type="entry name" value="Cpn60/GroEL"/>
</dbReference>
<dbReference type="InterPro" id="IPR002423">
    <property type="entry name" value="Cpn60/GroEL/TCP-1"/>
</dbReference>
<dbReference type="InterPro" id="IPR027409">
    <property type="entry name" value="GroEL-like_apical_dom_sf"/>
</dbReference>
<dbReference type="InterPro" id="IPR027413">
    <property type="entry name" value="GROEL-like_equatorial_sf"/>
</dbReference>
<dbReference type="InterPro" id="IPR027410">
    <property type="entry name" value="TCP-1-like_intermed_sf"/>
</dbReference>
<dbReference type="NCBIfam" id="TIGR02348">
    <property type="entry name" value="GroEL"/>
    <property type="match status" value="1"/>
</dbReference>
<dbReference type="NCBIfam" id="NF000592">
    <property type="entry name" value="PRK00013.1"/>
    <property type="match status" value="1"/>
</dbReference>
<dbReference type="NCBIfam" id="NF009487">
    <property type="entry name" value="PRK12849.1"/>
    <property type="match status" value="1"/>
</dbReference>
<dbReference type="NCBIfam" id="NF009488">
    <property type="entry name" value="PRK12850.1"/>
    <property type="match status" value="1"/>
</dbReference>
<dbReference type="NCBIfam" id="NF009489">
    <property type="entry name" value="PRK12851.1"/>
    <property type="match status" value="1"/>
</dbReference>
<dbReference type="PANTHER" id="PTHR45633">
    <property type="entry name" value="60 KDA HEAT SHOCK PROTEIN, MITOCHONDRIAL"/>
    <property type="match status" value="1"/>
</dbReference>
<dbReference type="Pfam" id="PF00118">
    <property type="entry name" value="Cpn60_TCP1"/>
    <property type="match status" value="1"/>
</dbReference>
<dbReference type="PRINTS" id="PR00298">
    <property type="entry name" value="CHAPERONIN60"/>
</dbReference>
<dbReference type="SUPFAM" id="SSF52029">
    <property type="entry name" value="GroEL apical domain-like"/>
    <property type="match status" value="1"/>
</dbReference>
<dbReference type="SUPFAM" id="SSF48592">
    <property type="entry name" value="GroEL equatorial domain-like"/>
    <property type="match status" value="1"/>
</dbReference>
<dbReference type="SUPFAM" id="SSF54849">
    <property type="entry name" value="GroEL-intermediate domain like"/>
    <property type="match status" value="1"/>
</dbReference>
<dbReference type="PROSITE" id="PS00296">
    <property type="entry name" value="CHAPERONINS_CPN60"/>
    <property type="match status" value="1"/>
</dbReference>
<gene>
    <name evidence="1" type="primary">groEL3</name>
    <name evidence="1" type="synonym">groL3</name>
    <name type="ordered locus">Nwi_2574</name>
</gene>
<feature type="chain" id="PRO_0000256938" description="Chaperonin GroEL 3">
    <location>
        <begin position="1"/>
        <end position="548"/>
    </location>
</feature>
<feature type="binding site" evidence="1">
    <location>
        <begin position="30"/>
        <end position="33"/>
    </location>
    <ligand>
        <name>ATP</name>
        <dbReference type="ChEBI" id="CHEBI:30616"/>
    </ligand>
</feature>
<feature type="binding site" evidence="1">
    <location>
        <position position="51"/>
    </location>
    <ligand>
        <name>ATP</name>
        <dbReference type="ChEBI" id="CHEBI:30616"/>
    </ligand>
</feature>
<feature type="binding site" evidence="1">
    <location>
        <begin position="87"/>
        <end position="91"/>
    </location>
    <ligand>
        <name>ATP</name>
        <dbReference type="ChEBI" id="CHEBI:30616"/>
    </ligand>
</feature>
<feature type="binding site" evidence="1">
    <location>
        <position position="415"/>
    </location>
    <ligand>
        <name>ATP</name>
        <dbReference type="ChEBI" id="CHEBI:30616"/>
    </ligand>
</feature>
<feature type="binding site" evidence="1">
    <location>
        <position position="496"/>
    </location>
    <ligand>
        <name>ATP</name>
        <dbReference type="ChEBI" id="CHEBI:30616"/>
    </ligand>
</feature>
<keyword id="KW-0067">ATP-binding</keyword>
<keyword id="KW-0143">Chaperone</keyword>
<keyword id="KW-0963">Cytoplasm</keyword>
<keyword id="KW-0413">Isomerase</keyword>
<keyword id="KW-0547">Nucleotide-binding</keyword>
<keyword id="KW-1185">Reference proteome</keyword>
<proteinExistence type="inferred from homology"/>
<organism>
    <name type="scientific">Nitrobacter winogradskyi (strain ATCC 25391 / DSM 10237 / CIP 104748 / NCIMB 11846 / Nb-255)</name>
    <dbReference type="NCBI Taxonomy" id="323098"/>
    <lineage>
        <taxon>Bacteria</taxon>
        <taxon>Pseudomonadati</taxon>
        <taxon>Pseudomonadota</taxon>
        <taxon>Alphaproteobacteria</taxon>
        <taxon>Hyphomicrobiales</taxon>
        <taxon>Nitrobacteraceae</taxon>
        <taxon>Nitrobacter</taxon>
    </lineage>
</organism>
<sequence length="548" mass="57757">MAAKDVKFSGDARQRMLRGVDILADAVKVTLGPKGRNVVIERSFGAPRITKDGVTVAKEIELEDRFENMGAQMVREVASKTNDLAGDGTTTATVLAQAIVREGAKAVAAGMNPMDLKRGIDIAVAAVVKDIGKRAKAVASSAEVAQVGTISSNGDASIGKMIAQAMQKVGNDGVITVEENKSLETDVDIVEGMKFDRGYLSPYFVTNAEKMAAELDDAYILLHEKKLTGLQALLPVLEAVVKSGKPLLIVAEDVEGEALAALVVNRLRGGLKVAAVKAPGFGDRRKAMLEDIAILTSGQLISDELGMKLENVTLNMLGRAKKVLIDKENTTIVNGAGKKKDIEARVGQIRARIEETTSDYDREKLQERLAKLAGGVAVIRVGGATEIEVKEKKDRVEDALNATRAAVEEGIVPGGGTALLRARKAVGRINNDNSDVQAGINIVLKALEAPIRQIAENAGVEGSIVVGKILENKTETFGFDAQKEEYVDMVAKGIIDPAKVVRTALQDASSIAGLLVTTEAMVAELPKDEPPAMPAGGGGMGGMGGMGF</sequence>
<comment type="function">
    <text evidence="1">Together with its co-chaperonin GroES, plays an essential role in assisting protein folding. The GroEL-GroES system forms a nano-cage that allows encapsulation of the non-native substrate proteins and provides a physical environment optimized to promote and accelerate protein folding.</text>
</comment>
<comment type="catalytic activity">
    <reaction evidence="1">
        <text>ATP + H2O + a folded polypeptide = ADP + phosphate + an unfolded polypeptide.</text>
        <dbReference type="EC" id="5.6.1.7"/>
    </reaction>
</comment>
<comment type="subunit">
    <text evidence="1">Forms a cylinder of 14 subunits composed of two heptameric rings stacked back-to-back. Interacts with the co-chaperonin GroES.</text>
</comment>
<comment type="subcellular location">
    <subcellularLocation>
        <location evidence="1">Cytoplasm</location>
    </subcellularLocation>
</comment>
<comment type="similarity">
    <text evidence="1">Belongs to the chaperonin (HSP60) family.</text>
</comment>
<protein>
    <recommendedName>
        <fullName evidence="1">Chaperonin GroEL 3</fullName>
        <ecNumber evidence="1">5.6.1.7</ecNumber>
    </recommendedName>
    <alternativeName>
        <fullName evidence="1">60 kDa chaperonin 3</fullName>
    </alternativeName>
    <alternativeName>
        <fullName evidence="1">Chaperonin-60 3</fullName>
        <shortName evidence="1">Cpn60 3</shortName>
    </alternativeName>
</protein>
<accession>Q3SPG4</accession>
<reference key="1">
    <citation type="journal article" date="2006" name="Appl. Environ. Microbiol.">
        <title>Genome sequence of the chemolithoautotrophic nitrite-oxidizing bacterium Nitrobacter winogradskyi Nb-255.</title>
        <authorList>
            <person name="Starkenburg S.R."/>
            <person name="Chain P.S.G."/>
            <person name="Sayavedra-Soto L.A."/>
            <person name="Hauser L."/>
            <person name="Land M.L."/>
            <person name="Larimer F.W."/>
            <person name="Malfatti S.A."/>
            <person name="Klotz M.G."/>
            <person name="Bottomley P.J."/>
            <person name="Arp D.J."/>
            <person name="Hickey W.J."/>
        </authorList>
    </citation>
    <scope>NUCLEOTIDE SEQUENCE [LARGE SCALE GENOMIC DNA]</scope>
    <source>
        <strain>ATCC 25391 / DSM 10237 / CIP 104748 / NCIMB 11846 / Nb-255</strain>
    </source>
</reference>
<name>CH603_NITWN</name>